<dbReference type="PIR" id="A00250">
    <property type="entry name" value="FESGAL"/>
</dbReference>
<dbReference type="PDB" id="4FXC">
    <property type="method" value="X-ray"/>
    <property type="resolution" value="2.50 A"/>
    <property type="chains" value="A=2-99"/>
</dbReference>
<dbReference type="PDBsum" id="4FXC"/>
<dbReference type="SMR" id="P00246"/>
<dbReference type="EvolutionaryTrace" id="P00246"/>
<dbReference type="GO" id="GO:0051537">
    <property type="term" value="F:2 iron, 2 sulfur cluster binding"/>
    <property type="evidence" value="ECO:0007669"/>
    <property type="project" value="UniProtKB-KW"/>
</dbReference>
<dbReference type="GO" id="GO:0009055">
    <property type="term" value="F:electron transfer activity"/>
    <property type="evidence" value="ECO:0007669"/>
    <property type="project" value="InterPro"/>
</dbReference>
<dbReference type="GO" id="GO:0046872">
    <property type="term" value="F:metal ion binding"/>
    <property type="evidence" value="ECO:0007669"/>
    <property type="project" value="UniProtKB-KW"/>
</dbReference>
<dbReference type="GO" id="GO:0022900">
    <property type="term" value="P:electron transport chain"/>
    <property type="evidence" value="ECO:0007669"/>
    <property type="project" value="InterPro"/>
</dbReference>
<dbReference type="CDD" id="cd00207">
    <property type="entry name" value="fer2"/>
    <property type="match status" value="1"/>
</dbReference>
<dbReference type="FunFam" id="3.10.20.30:FF:000014">
    <property type="entry name" value="Ferredoxin"/>
    <property type="match status" value="1"/>
</dbReference>
<dbReference type="Gene3D" id="3.10.20.30">
    <property type="match status" value="1"/>
</dbReference>
<dbReference type="InterPro" id="IPR036010">
    <property type="entry name" value="2Fe-2S_ferredoxin-like_sf"/>
</dbReference>
<dbReference type="InterPro" id="IPR001041">
    <property type="entry name" value="2Fe-2S_ferredoxin-type"/>
</dbReference>
<dbReference type="InterPro" id="IPR006058">
    <property type="entry name" value="2Fe2S_fd_BS"/>
</dbReference>
<dbReference type="InterPro" id="IPR012675">
    <property type="entry name" value="Beta-grasp_dom_sf"/>
</dbReference>
<dbReference type="InterPro" id="IPR010241">
    <property type="entry name" value="Fd_pln"/>
</dbReference>
<dbReference type="NCBIfam" id="TIGR02008">
    <property type="entry name" value="fdx_plant"/>
    <property type="match status" value="1"/>
</dbReference>
<dbReference type="PANTHER" id="PTHR43112">
    <property type="entry name" value="FERREDOXIN"/>
    <property type="match status" value="1"/>
</dbReference>
<dbReference type="PANTHER" id="PTHR43112:SF3">
    <property type="entry name" value="FERREDOXIN-2, CHLOROPLASTIC"/>
    <property type="match status" value="1"/>
</dbReference>
<dbReference type="Pfam" id="PF00111">
    <property type="entry name" value="Fer2"/>
    <property type="match status" value="1"/>
</dbReference>
<dbReference type="SUPFAM" id="SSF54292">
    <property type="entry name" value="2Fe-2S ferredoxin-like"/>
    <property type="match status" value="1"/>
</dbReference>
<dbReference type="PROSITE" id="PS00197">
    <property type="entry name" value="2FE2S_FER_1"/>
    <property type="match status" value="1"/>
</dbReference>
<dbReference type="PROSITE" id="PS51085">
    <property type="entry name" value="2FE2S_FER_2"/>
    <property type="match status" value="1"/>
</dbReference>
<evidence type="ECO:0000255" key="1">
    <source>
        <dbReference type="PROSITE-ProRule" id="PRU00465"/>
    </source>
</evidence>
<evidence type="ECO:0000269" key="2">
    <source>
    </source>
</evidence>
<evidence type="ECO:0000305" key="3"/>
<evidence type="ECO:0007829" key="4">
    <source>
        <dbReference type="PDB" id="4FXC"/>
    </source>
</evidence>
<name>FER_ARTPT</name>
<accession>P00246</accession>
<organism>
    <name type="scientific">Arthrospira platensis</name>
    <name type="common">Spirulina platensis</name>
    <dbReference type="NCBI Taxonomy" id="118562"/>
    <lineage>
        <taxon>Bacteria</taxon>
        <taxon>Bacillati</taxon>
        <taxon>Cyanobacteriota</taxon>
        <taxon>Cyanophyceae</taxon>
        <taxon>Oscillatoriophycideae</taxon>
        <taxon>Oscillatoriales</taxon>
        <taxon>Microcoleaceae</taxon>
        <taxon>Arthrospira</taxon>
    </lineage>
</organism>
<comment type="function">
    <text>Ferredoxins are iron-sulfur proteins that transfer electrons in a wide variety of metabolic reactions.</text>
</comment>
<comment type="cofactor">
    <cofactor>
        <name>[2Fe-2S] cluster</name>
        <dbReference type="ChEBI" id="CHEBI:190135"/>
    </cofactor>
    <text>Binds 1 [2Fe-2S] cluster.</text>
</comment>
<comment type="similarity">
    <text evidence="3">Belongs to the 2Fe2S plant-type ferredoxin family.</text>
</comment>
<feature type="initiator methionine" description="Removed" evidence="2">
    <location>
        <position position="1"/>
    </location>
</feature>
<feature type="chain" id="PRO_0000189371" description="Ferredoxin">
    <location>
        <begin position="2"/>
        <end position="99"/>
    </location>
</feature>
<feature type="domain" description="2Fe-2S ferredoxin-type" evidence="1">
    <location>
        <begin position="4"/>
        <end position="96"/>
    </location>
</feature>
<feature type="binding site">
    <location>
        <position position="42"/>
    </location>
    <ligand>
        <name>[2Fe-2S] cluster</name>
        <dbReference type="ChEBI" id="CHEBI:190135"/>
    </ligand>
</feature>
<feature type="binding site">
    <location>
        <position position="47"/>
    </location>
    <ligand>
        <name>[2Fe-2S] cluster</name>
        <dbReference type="ChEBI" id="CHEBI:190135"/>
    </ligand>
</feature>
<feature type="binding site">
    <location>
        <position position="50"/>
    </location>
    <ligand>
        <name>[2Fe-2S] cluster</name>
        <dbReference type="ChEBI" id="CHEBI:190135"/>
    </ligand>
</feature>
<feature type="binding site">
    <location>
        <position position="80"/>
    </location>
    <ligand>
        <name>[2Fe-2S] cluster</name>
        <dbReference type="ChEBI" id="CHEBI:190135"/>
    </ligand>
</feature>
<feature type="strand" evidence="4">
    <location>
        <begin position="5"/>
        <end position="9"/>
    </location>
</feature>
<feature type="strand" evidence="4">
    <location>
        <begin position="16"/>
        <end position="20"/>
    </location>
</feature>
<feature type="helix" evidence="4">
    <location>
        <begin position="27"/>
        <end position="33"/>
    </location>
</feature>
<feature type="strand" evidence="4">
    <location>
        <begin position="41"/>
        <end position="46"/>
    </location>
</feature>
<feature type="strand" evidence="4">
    <location>
        <begin position="48"/>
        <end position="60"/>
    </location>
</feature>
<feature type="helix" evidence="4">
    <location>
        <begin position="69"/>
        <end position="73"/>
    </location>
</feature>
<feature type="helix" evidence="4">
    <location>
        <begin position="79"/>
        <end position="81"/>
    </location>
</feature>
<feature type="strand" evidence="4">
    <location>
        <begin position="83"/>
        <end position="93"/>
    </location>
</feature>
<feature type="turn" evidence="4">
    <location>
        <begin position="95"/>
        <end position="97"/>
    </location>
</feature>
<protein>
    <recommendedName>
        <fullName>Ferredoxin</fullName>
    </recommendedName>
</protein>
<reference key="1">
    <citation type="journal article" date="1976" name="Biochem. Biophys. Res. Commun.">
        <title>The complete amino acid sequence of the Spirulina platensis ferredoxin.</title>
        <authorList>
            <person name="Tanaka M."/>
            <person name="Haniu M."/>
            <person name="Yasunobu K.T."/>
            <person name="Rao K.K."/>
            <person name="Hall D.O."/>
        </authorList>
    </citation>
    <scope>PROTEIN SEQUENCE OF 2-99</scope>
</reference>
<reference key="2">
    <citation type="journal article" date="1981" name="J. Biochem.">
        <title>X-ray analysis of a [2Fe-2S] ferrodoxin from Spirulina platensis. Main chain fold and location of side chains at 2.5-A resolution.</title>
        <authorList>
            <person name="Tsukihara T."/>
            <person name="Fukuyama K."/>
            <person name="Nakamura M."/>
            <person name="Katsube Y."/>
            <person name="Tanaka N."/>
            <person name="Kakudo M."/>
            <person name="Wada K."/>
            <person name="Hase T."/>
            <person name="Matsubara H."/>
        </authorList>
    </citation>
    <scope>X-RAY CRYSTALLOGRAPHY (2.5 ANGSTROMS)</scope>
</reference>
<reference key="3">
    <citation type="journal article" date="1980" name="Nature">
        <title>Structure of S. platensis [2Fe-2S] ferredoxin and evolution of chloroplast-type ferrodoxins.</title>
        <authorList>
            <person name="Fukuyama K."/>
            <person name="Hase T."/>
            <person name="Matsumoto S."/>
            <person name="Tsukihara T."/>
            <person name="Katsube Y."/>
            <person name="Tanaka N."/>
            <person name="Kakudo M."/>
            <person name="Wada K."/>
            <person name="Hase T."/>
            <person name="Matsubara H."/>
        </authorList>
    </citation>
    <scope>X-RAY CRYSTALLOGRAPHY (2.5 ANGSTROMS)</scope>
</reference>
<sequence>MATYKVTLINEAEGINETIDCDDDTYILDAAEEAGLDLPYSCRAGACSTCAGTITSGTIDQSDQSFLDDDQIEAGYVLTCVAYPTSDCTIKTHQEEGLY</sequence>
<proteinExistence type="evidence at protein level"/>
<keyword id="KW-0001">2Fe-2S</keyword>
<keyword id="KW-0002">3D-structure</keyword>
<keyword id="KW-0903">Direct protein sequencing</keyword>
<keyword id="KW-0249">Electron transport</keyword>
<keyword id="KW-0408">Iron</keyword>
<keyword id="KW-0411">Iron-sulfur</keyword>
<keyword id="KW-0479">Metal-binding</keyword>
<keyword id="KW-0813">Transport</keyword>